<evidence type="ECO:0000255" key="1">
    <source>
        <dbReference type="HAMAP-Rule" id="MF_01629"/>
    </source>
</evidence>
<proteinExistence type="inferred from homology"/>
<sequence>MKNIADIRQEYTKSGLRESELPCDPLSLFSRWLQEAIDANVEEPTAIIVGTVSPEGRPSTRTVLLKGLHDGKFIFYTNYESRKGRQLAQNPYISLSFVWHELERQVHIEGTAAKVSPEESDEYFRKRPYKSRIGARISPQSQPIASRMQLIRAFVKEAARWLGKEVERPDNWGGYAVTPTRMEFWQGRPNRLHDRFLYTLKTDGKWEINRLSP</sequence>
<reference key="1">
    <citation type="journal article" date="2003" name="Science">
        <title>A genomic view of the human-Bacteroides thetaiotaomicron symbiosis.</title>
        <authorList>
            <person name="Xu J."/>
            <person name="Bjursell M.K."/>
            <person name="Himrod J."/>
            <person name="Deng S."/>
            <person name="Carmichael L.K."/>
            <person name="Chiang H.C."/>
            <person name="Hooper L.V."/>
            <person name="Gordon J.I."/>
        </authorList>
    </citation>
    <scope>NUCLEOTIDE SEQUENCE [LARGE SCALE GENOMIC DNA]</scope>
    <source>
        <strain>ATCC 29148 / DSM 2079 / JCM 5827 / CCUG 10774 / NCTC 10582 / VPI-5482 / E50</strain>
    </source>
</reference>
<organism>
    <name type="scientific">Bacteroides thetaiotaomicron (strain ATCC 29148 / DSM 2079 / JCM 5827 / CCUG 10774 / NCTC 10582 / VPI-5482 / E50)</name>
    <dbReference type="NCBI Taxonomy" id="226186"/>
    <lineage>
        <taxon>Bacteria</taxon>
        <taxon>Pseudomonadati</taxon>
        <taxon>Bacteroidota</taxon>
        <taxon>Bacteroidia</taxon>
        <taxon>Bacteroidales</taxon>
        <taxon>Bacteroidaceae</taxon>
        <taxon>Bacteroides</taxon>
    </lineage>
</organism>
<gene>
    <name evidence="1" type="primary">pdxH</name>
    <name type="ordered locus">BT_1577</name>
</gene>
<feature type="chain" id="PRO_0000167683" description="Pyridoxine/pyridoxamine 5'-phosphate oxidase">
    <location>
        <begin position="1"/>
        <end position="213"/>
    </location>
</feature>
<feature type="binding site" evidence="1">
    <location>
        <begin position="8"/>
        <end position="11"/>
    </location>
    <ligand>
        <name>substrate</name>
    </ligand>
</feature>
<feature type="binding site" evidence="1">
    <location>
        <begin position="61"/>
        <end position="66"/>
    </location>
    <ligand>
        <name>FMN</name>
        <dbReference type="ChEBI" id="CHEBI:58210"/>
    </ligand>
</feature>
<feature type="binding site" evidence="1">
    <location>
        <position position="66"/>
    </location>
    <ligand>
        <name>substrate</name>
    </ligand>
</feature>
<feature type="binding site" evidence="1">
    <location>
        <begin position="76"/>
        <end position="77"/>
    </location>
    <ligand>
        <name>FMN</name>
        <dbReference type="ChEBI" id="CHEBI:58210"/>
    </ligand>
</feature>
<feature type="binding site" evidence="1">
    <location>
        <position position="82"/>
    </location>
    <ligand>
        <name>FMN</name>
        <dbReference type="ChEBI" id="CHEBI:58210"/>
    </ligand>
</feature>
<feature type="binding site" evidence="1">
    <location>
        <position position="83"/>
    </location>
    <ligand>
        <name>FMN</name>
        <dbReference type="ChEBI" id="CHEBI:58210"/>
    </ligand>
</feature>
<feature type="binding site" evidence="1">
    <location>
        <position position="105"/>
    </location>
    <ligand>
        <name>FMN</name>
        <dbReference type="ChEBI" id="CHEBI:58210"/>
    </ligand>
</feature>
<feature type="binding site" evidence="1">
    <location>
        <position position="123"/>
    </location>
    <ligand>
        <name>substrate</name>
    </ligand>
</feature>
<feature type="binding site" evidence="1">
    <location>
        <position position="127"/>
    </location>
    <ligand>
        <name>substrate</name>
    </ligand>
</feature>
<feature type="binding site" evidence="1">
    <location>
        <position position="131"/>
    </location>
    <ligand>
        <name>substrate</name>
    </ligand>
</feature>
<feature type="binding site" evidence="1">
    <location>
        <begin position="140"/>
        <end position="141"/>
    </location>
    <ligand>
        <name>FMN</name>
        <dbReference type="ChEBI" id="CHEBI:58210"/>
    </ligand>
</feature>
<feature type="binding site" evidence="1">
    <location>
        <position position="185"/>
    </location>
    <ligand>
        <name>FMN</name>
        <dbReference type="ChEBI" id="CHEBI:58210"/>
    </ligand>
</feature>
<feature type="binding site" evidence="1">
    <location>
        <begin position="191"/>
        <end position="193"/>
    </location>
    <ligand>
        <name>substrate</name>
    </ligand>
</feature>
<feature type="binding site" evidence="1">
    <location>
        <position position="195"/>
    </location>
    <ligand>
        <name>FMN</name>
        <dbReference type="ChEBI" id="CHEBI:58210"/>
    </ligand>
</feature>
<name>PDXH_BACTN</name>
<accession>Q8A7E7</accession>
<keyword id="KW-0285">Flavoprotein</keyword>
<keyword id="KW-0288">FMN</keyword>
<keyword id="KW-0560">Oxidoreductase</keyword>
<keyword id="KW-0664">Pyridoxine biosynthesis</keyword>
<keyword id="KW-1185">Reference proteome</keyword>
<dbReference type="EC" id="1.4.3.5" evidence="1"/>
<dbReference type="EMBL" id="AE015928">
    <property type="protein sequence ID" value="AAO76684.1"/>
    <property type="molecule type" value="Genomic_DNA"/>
</dbReference>
<dbReference type="RefSeq" id="NP_810490.1">
    <property type="nucleotide sequence ID" value="NC_004663.1"/>
</dbReference>
<dbReference type="RefSeq" id="WP_011107871.1">
    <property type="nucleotide sequence ID" value="NC_004663.1"/>
</dbReference>
<dbReference type="SMR" id="Q8A7E7"/>
<dbReference type="FunCoup" id="Q8A7E7">
    <property type="interactions" value="441"/>
</dbReference>
<dbReference type="STRING" id="226186.BT_1577"/>
<dbReference type="PaxDb" id="226186-BT_1577"/>
<dbReference type="EnsemblBacteria" id="AAO76684">
    <property type="protein sequence ID" value="AAO76684"/>
    <property type="gene ID" value="BT_1577"/>
</dbReference>
<dbReference type="GeneID" id="60927559"/>
<dbReference type="KEGG" id="bth:BT_1577"/>
<dbReference type="PATRIC" id="fig|226186.12.peg.1612"/>
<dbReference type="eggNOG" id="COG0259">
    <property type="taxonomic scope" value="Bacteria"/>
</dbReference>
<dbReference type="HOGENOM" id="CLU_032263_2_2_10"/>
<dbReference type="InParanoid" id="Q8A7E7"/>
<dbReference type="OrthoDB" id="9780392at2"/>
<dbReference type="UniPathway" id="UPA01068">
    <property type="reaction ID" value="UER00304"/>
</dbReference>
<dbReference type="UniPathway" id="UPA01068">
    <property type="reaction ID" value="UER00305"/>
</dbReference>
<dbReference type="Proteomes" id="UP000001414">
    <property type="component" value="Chromosome"/>
</dbReference>
<dbReference type="GO" id="GO:0010181">
    <property type="term" value="F:FMN binding"/>
    <property type="evidence" value="ECO:0007669"/>
    <property type="project" value="UniProtKB-UniRule"/>
</dbReference>
<dbReference type="GO" id="GO:0004733">
    <property type="term" value="F:pyridoxamine phosphate oxidase activity"/>
    <property type="evidence" value="ECO:0007669"/>
    <property type="project" value="UniProtKB-UniRule"/>
</dbReference>
<dbReference type="GO" id="GO:0008615">
    <property type="term" value="P:pyridoxine biosynthetic process"/>
    <property type="evidence" value="ECO:0007669"/>
    <property type="project" value="UniProtKB-KW"/>
</dbReference>
<dbReference type="Gene3D" id="2.30.110.10">
    <property type="entry name" value="Electron Transport, Fmn-binding Protein, Chain A"/>
    <property type="match status" value="1"/>
</dbReference>
<dbReference type="HAMAP" id="MF_01629">
    <property type="entry name" value="PdxH"/>
    <property type="match status" value="1"/>
</dbReference>
<dbReference type="InterPro" id="IPR000659">
    <property type="entry name" value="Pyridox_Oxase"/>
</dbReference>
<dbReference type="InterPro" id="IPR019740">
    <property type="entry name" value="Pyridox_Oxase_CS"/>
</dbReference>
<dbReference type="InterPro" id="IPR011576">
    <property type="entry name" value="Pyridox_Oxase_N"/>
</dbReference>
<dbReference type="InterPro" id="IPR019576">
    <property type="entry name" value="Pyridoxamine_oxidase_dimer_C"/>
</dbReference>
<dbReference type="InterPro" id="IPR012349">
    <property type="entry name" value="Split_barrel_FMN-bd"/>
</dbReference>
<dbReference type="NCBIfam" id="TIGR00558">
    <property type="entry name" value="pdxH"/>
    <property type="match status" value="1"/>
</dbReference>
<dbReference type="NCBIfam" id="NF004231">
    <property type="entry name" value="PRK05679.1"/>
    <property type="match status" value="1"/>
</dbReference>
<dbReference type="PANTHER" id="PTHR10851:SF0">
    <property type="entry name" value="PYRIDOXINE-5'-PHOSPHATE OXIDASE"/>
    <property type="match status" value="1"/>
</dbReference>
<dbReference type="PANTHER" id="PTHR10851">
    <property type="entry name" value="PYRIDOXINE-5-PHOSPHATE OXIDASE"/>
    <property type="match status" value="1"/>
</dbReference>
<dbReference type="Pfam" id="PF10590">
    <property type="entry name" value="PNP_phzG_C"/>
    <property type="match status" value="1"/>
</dbReference>
<dbReference type="Pfam" id="PF01243">
    <property type="entry name" value="PNPOx_N"/>
    <property type="match status" value="1"/>
</dbReference>
<dbReference type="PIRSF" id="PIRSF000190">
    <property type="entry name" value="Pyd_amn-ph_oxd"/>
    <property type="match status" value="1"/>
</dbReference>
<dbReference type="SUPFAM" id="SSF50475">
    <property type="entry name" value="FMN-binding split barrel"/>
    <property type="match status" value="1"/>
</dbReference>
<dbReference type="PROSITE" id="PS01064">
    <property type="entry name" value="PYRIDOX_OXIDASE"/>
    <property type="match status" value="1"/>
</dbReference>
<protein>
    <recommendedName>
        <fullName evidence="1">Pyridoxine/pyridoxamine 5'-phosphate oxidase</fullName>
        <ecNumber evidence="1">1.4.3.5</ecNumber>
    </recommendedName>
    <alternativeName>
        <fullName evidence="1">PNP/PMP oxidase</fullName>
        <shortName evidence="1">PNPOx</shortName>
    </alternativeName>
    <alternativeName>
        <fullName evidence="1">Pyridoxal 5'-phosphate synthase</fullName>
    </alternativeName>
</protein>
<comment type="function">
    <text evidence="1">Catalyzes the oxidation of either pyridoxine 5'-phosphate (PNP) or pyridoxamine 5'-phosphate (PMP) into pyridoxal 5'-phosphate (PLP).</text>
</comment>
<comment type="catalytic activity">
    <reaction evidence="1">
        <text>pyridoxamine 5'-phosphate + O2 + H2O = pyridoxal 5'-phosphate + H2O2 + NH4(+)</text>
        <dbReference type="Rhea" id="RHEA:15817"/>
        <dbReference type="ChEBI" id="CHEBI:15377"/>
        <dbReference type="ChEBI" id="CHEBI:15379"/>
        <dbReference type="ChEBI" id="CHEBI:16240"/>
        <dbReference type="ChEBI" id="CHEBI:28938"/>
        <dbReference type="ChEBI" id="CHEBI:58451"/>
        <dbReference type="ChEBI" id="CHEBI:597326"/>
        <dbReference type="EC" id="1.4.3.5"/>
    </reaction>
</comment>
<comment type="catalytic activity">
    <reaction evidence="1">
        <text>pyridoxine 5'-phosphate + O2 = pyridoxal 5'-phosphate + H2O2</text>
        <dbReference type="Rhea" id="RHEA:15149"/>
        <dbReference type="ChEBI" id="CHEBI:15379"/>
        <dbReference type="ChEBI" id="CHEBI:16240"/>
        <dbReference type="ChEBI" id="CHEBI:58589"/>
        <dbReference type="ChEBI" id="CHEBI:597326"/>
        <dbReference type="EC" id="1.4.3.5"/>
    </reaction>
</comment>
<comment type="cofactor">
    <cofactor evidence="1">
        <name>FMN</name>
        <dbReference type="ChEBI" id="CHEBI:58210"/>
    </cofactor>
    <text evidence="1">Binds 1 FMN per subunit.</text>
</comment>
<comment type="pathway">
    <text evidence="1">Cofactor metabolism; pyridoxal 5'-phosphate salvage; pyridoxal 5'-phosphate from pyridoxamine 5'-phosphate: step 1/1.</text>
</comment>
<comment type="pathway">
    <text evidence="1">Cofactor metabolism; pyridoxal 5'-phosphate salvage; pyridoxal 5'-phosphate from pyridoxine 5'-phosphate: step 1/1.</text>
</comment>
<comment type="subunit">
    <text evidence="1">Homodimer.</text>
</comment>
<comment type="similarity">
    <text evidence="1">Belongs to the pyridoxamine 5'-phosphate oxidase family.</text>
</comment>